<gene>
    <name type="primary">LGMN</name>
    <name type="synonym">PRSC1</name>
</gene>
<comment type="function">
    <text evidence="1 2">Has a strict specificity for hydrolysis of asparaginyl bonds. Can also cleave aspartyl bonds slowly, especially under acidic conditions. Involved in the processing of proteins for MHC class II antigen presentation in the lysosomal/endosomal system (By similarity). Also involved in MHC class I antigen presentation in cross-presenting dendritic cells by mediating cleavage and maturation of Perforin-2 (MPEG1), thereby promoting antigen translocation in the cytosol. Required for normal lysosomal protein degradation in renal proximal tubules. Required for normal degradation of internalized EGFR. Plays a role in the regulation of cell proliferation via its role in EGFR degradation (By similarity).</text>
</comment>
<comment type="catalytic activity">
    <reaction>
        <text>Hydrolysis of proteins and small molecule substrates at -Asn-|-Xaa- bonds.</text>
        <dbReference type="EC" id="3.4.22.34"/>
    </reaction>
</comment>
<comment type="subunit">
    <text evidence="2">Homodimer before autocatalytic removal of the propeptide. Monomer after autocatalytic processing. May interact with integrins.</text>
</comment>
<comment type="subcellular location">
    <subcellularLocation>
        <location evidence="1">Lysosome</location>
    </subcellularLocation>
</comment>
<comment type="domain">
    <text evidence="2">In the zymogen form, the uncleaved propeptide blocks access to the active site.</text>
</comment>
<comment type="PTM">
    <text evidence="2">Activated by autocatalytic processing at pH 4.</text>
</comment>
<comment type="similarity">
    <text evidence="4">Belongs to the peptidase C13 family.</text>
</comment>
<evidence type="ECO:0000250" key="1">
    <source>
        <dbReference type="UniProtKB" id="O89017"/>
    </source>
</evidence>
<evidence type="ECO:0000250" key="2">
    <source>
        <dbReference type="UniProtKB" id="Q99538"/>
    </source>
</evidence>
<evidence type="ECO:0000255" key="3"/>
<evidence type="ECO:0000305" key="4"/>
<reference key="1">
    <citation type="submission" date="2004-11" db="EMBL/GenBank/DDBJ databases">
        <authorList>
            <consortium name="The German cDNA consortium"/>
        </authorList>
    </citation>
    <scope>NUCLEOTIDE SEQUENCE [LARGE SCALE MRNA]</scope>
    <source>
        <tissue>Kidney</tissue>
    </source>
</reference>
<organism>
    <name type="scientific">Pongo abelii</name>
    <name type="common">Sumatran orangutan</name>
    <name type="synonym">Pongo pygmaeus abelii</name>
    <dbReference type="NCBI Taxonomy" id="9601"/>
    <lineage>
        <taxon>Eukaryota</taxon>
        <taxon>Metazoa</taxon>
        <taxon>Chordata</taxon>
        <taxon>Craniata</taxon>
        <taxon>Vertebrata</taxon>
        <taxon>Euteleostomi</taxon>
        <taxon>Mammalia</taxon>
        <taxon>Eutheria</taxon>
        <taxon>Euarchontoglires</taxon>
        <taxon>Primates</taxon>
        <taxon>Haplorrhini</taxon>
        <taxon>Catarrhini</taxon>
        <taxon>Hominidae</taxon>
        <taxon>Pongo</taxon>
    </lineage>
</organism>
<feature type="signal peptide" evidence="2">
    <location>
        <begin position="1"/>
        <end position="17"/>
    </location>
</feature>
<feature type="chain" id="PRO_0000259474" description="Legumain">
    <location>
        <begin position="18"/>
        <end position="323"/>
    </location>
</feature>
<feature type="propeptide" id="PRO_0000259475" evidence="1">
    <location>
        <begin position="324"/>
        <end position="433"/>
    </location>
</feature>
<feature type="active site" evidence="1">
    <location>
        <position position="148"/>
    </location>
</feature>
<feature type="active site" description="Nucleophile" evidence="1">
    <location>
        <position position="189"/>
    </location>
</feature>
<feature type="site" description="Cleavage; by autolysis" evidence="1">
    <location>
        <begin position="323"/>
        <end position="324"/>
    </location>
</feature>
<feature type="glycosylation site" description="N-linked (GlcNAc...) asparagine" evidence="3">
    <location>
        <position position="91"/>
    </location>
</feature>
<feature type="glycosylation site" description="N-linked (GlcNAc...) asparagine" evidence="3">
    <location>
        <position position="167"/>
    </location>
</feature>
<feature type="glycosylation site" description="N-linked (GlcNAc...) asparagine" evidence="3">
    <location>
        <position position="263"/>
    </location>
</feature>
<feature type="glycosylation site" description="N-linked (GlcNAc...) asparagine" evidence="3">
    <location>
        <position position="272"/>
    </location>
</feature>
<feature type="disulfide bond" evidence="1">
    <location>
        <begin position="378"/>
        <end position="412"/>
    </location>
</feature>
<feature type="disulfide bond" evidence="1">
    <location>
        <begin position="390"/>
        <end position="429"/>
    </location>
</feature>
<accession>Q5R5D9</accession>
<sequence>MVWKVAVFLSAALVIGAVPIDDPEDGGKHWVVIVAGSNGWYNYRHQADACHAYQIIHRNGIPDEQIVVMMYDDIAYSEDNPTPGIVINRPNGTDVYQGVPKDYTGEDVTPQNFLAVLRGDAEAVKGIGSGKVLKSGPQDHVFVYSTDHGSTGILVFPNEDLHVEDLNETIHYMYKHKMYRKMVFYIEACESGSMMNHLPDNINVYATTAANPRESSYACYYDEKRSTYLGDWYSVNWMEDSDVEDLTKETLHKQYHLVKSHTNTSHVMQYGNKTISTMKVMQFQGMKHKASSPISLPPVTHLDLTPSPDVPLTIMKRKLMNTNDLEESRQLTEEIQQHLDARHLIEKSVRKIVSLLAASEAEVEQLLSERAPLTGHSCYPEALLHFRTHCFNWHSPTYEYALRHLYVLVNLCEKPYPLHRIKLSMDHVCLGHY</sequence>
<protein>
    <recommendedName>
        <fullName>Legumain</fullName>
        <ecNumber>3.4.22.34</ecNumber>
    </recommendedName>
    <alternativeName>
        <fullName>Asparaginyl endopeptidase</fullName>
    </alternativeName>
    <alternativeName>
        <fullName>Protease, cysteine 1</fullName>
    </alternativeName>
</protein>
<proteinExistence type="evidence at transcript level"/>
<keyword id="KW-1015">Disulfide bond</keyword>
<keyword id="KW-0325">Glycoprotein</keyword>
<keyword id="KW-0378">Hydrolase</keyword>
<keyword id="KW-0458">Lysosome</keyword>
<keyword id="KW-0645">Protease</keyword>
<keyword id="KW-1185">Reference proteome</keyword>
<keyword id="KW-0732">Signal</keyword>
<keyword id="KW-0788">Thiol protease</keyword>
<keyword id="KW-0865">Zymogen</keyword>
<dbReference type="EC" id="3.4.22.34"/>
<dbReference type="EMBL" id="CR860922">
    <property type="protein sequence ID" value="CAH93027.1"/>
    <property type="molecule type" value="mRNA"/>
</dbReference>
<dbReference type="RefSeq" id="NP_001126789.1">
    <property type="nucleotide sequence ID" value="NM_001133317.1"/>
</dbReference>
<dbReference type="SMR" id="Q5R5D9"/>
<dbReference type="FunCoup" id="Q5R5D9">
    <property type="interactions" value="296"/>
</dbReference>
<dbReference type="STRING" id="9601.ENSPPYP00000006913"/>
<dbReference type="MEROPS" id="C13.004"/>
<dbReference type="GlyCosmos" id="Q5R5D9">
    <property type="glycosylation" value="4 sites, No reported glycans"/>
</dbReference>
<dbReference type="GeneID" id="100173793"/>
<dbReference type="KEGG" id="pon:100173793"/>
<dbReference type="CTD" id="5641"/>
<dbReference type="eggNOG" id="KOG1348">
    <property type="taxonomic scope" value="Eukaryota"/>
</dbReference>
<dbReference type="InParanoid" id="Q5R5D9"/>
<dbReference type="OrthoDB" id="192611at2759"/>
<dbReference type="Proteomes" id="UP000001595">
    <property type="component" value="Unplaced"/>
</dbReference>
<dbReference type="GO" id="GO:0043202">
    <property type="term" value="C:lysosomal lumen"/>
    <property type="evidence" value="ECO:0000250"/>
    <property type="project" value="UniProtKB"/>
</dbReference>
<dbReference type="GO" id="GO:0005764">
    <property type="term" value="C:lysosome"/>
    <property type="evidence" value="ECO:0000250"/>
    <property type="project" value="UniProtKB"/>
</dbReference>
<dbReference type="GO" id="GO:0004197">
    <property type="term" value="F:cysteine-type endopeptidase activity"/>
    <property type="evidence" value="ECO:0000250"/>
    <property type="project" value="UniProtKB"/>
</dbReference>
<dbReference type="GO" id="GO:0019886">
    <property type="term" value="P:antigen processing and presentation of exogenous peptide antigen via MHC class II"/>
    <property type="evidence" value="ECO:0000250"/>
    <property type="project" value="UniProtKB"/>
</dbReference>
<dbReference type="GO" id="GO:1901185">
    <property type="term" value="P:negative regulation of ERBB signaling pathway"/>
    <property type="evidence" value="ECO:0000250"/>
    <property type="project" value="UniProtKB"/>
</dbReference>
<dbReference type="GO" id="GO:0006508">
    <property type="term" value="P:proteolysis"/>
    <property type="evidence" value="ECO:0000250"/>
    <property type="project" value="UniProtKB"/>
</dbReference>
<dbReference type="GO" id="GO:0051603">
    <property type="term" value="P:proteolysis involved in protein catabolic process"/>
    <property type="evidence" value="ECO:0000250"/>
    <property type="project" value="UniProtKB"/>
</dbReference>
<dbReference type="GO" id="GO:0032801">
    <property type="term" value="P:receptor catabolic process"/>
    <property type="evidence" value="ECO:0000250"/>
    <property type="project" value="UniProtKB"/>
</dbReference>
<dbReference type="GO" id="GO:0003014">
    <property type="term" value="P:renal system process"/>
    <property type="evidence" value="ECO:0000250"/>
    <property type="project" value="UniProtKB"/>
</dbReference>
<dbReference type="GO" id="GO:0006624">
    <property type="term" value="P:vacuolar protein processing"/>
    <property type="evidence" value="ECO:0007669"/>
    <property type="project" value="TreeGrafter"/>
</dbReference>
<dbReference type="CDD" id="cd21115">
    <property type="entry name" value="legumain_C"/>
    <property type="match status" value="1"/>
</dbReference>
<dbReference type="FunFam" id="3.40.50.1460:FF:000006">
    <property type="entry name" value="Legumain"/>
    <property type="match status" value="1"/>
</dbReference>
<dbReference type="FunFam" id="1.10.132.130:FF:000002">
    <property type="entry name" value="Legumain preproprotein"/>
    <property type="match status" value="1"/>
</dbReference>
<dbReference type="Gene3D" id="1.10.132.130">
    <property type="match status" value="1"/>
</dbReference>
<dbReference type="Gene3D" id="3.40.50.1460">
    <property type="match status" value="1"/>
</dbReference>
<dbReference type="InterPro" id="IPR043577">
    <property type="entry name" value="AE"/>
</dbReference>
<dbReference type="InterPro" id="IPR048501">
    <property type="entry name" value="Legum_prodom"/>
</dbReference>
<dbReference type="InterPro" id="IPR046427">
    <property type="entry name" value="Legumain_prodom_sf"/>
</dbReference>
<dbReference type="InterPro" id="IPR001096">
    <property type="entry name" value="Peptidase_C13"/>
</dbReference>
<dbReference type="PANTHER" id="PTHR12000">
    <property type="entry name" value="HEMOGLOBINASE FAMILY MEMBER"/>
    <property type="match status" value="1"/>
</dbReference>
<dbReference type="PANTHER" id="PTHR12000:SF42">
    <property type="entry name" value="LEGUMAIN"/>
    <property type="match status" value="1"/>
</dbReference>
<dbReference type="Pfam" id="PF20985">
    <property type="entry name" value="Legum_prodom"/>
    <property type="match status" value="1"/>
</dbReference>
<dbReference type="Pfam" id="PF01650">
    <property type="entry name" value="Peptidase_C13"/>
    <property type="match status" value="1"/>
</dbReference>
<dbReference type="PIRSF" id="PIRSF500139">
    <property type="entry name" value="AE"/>
    <property type="match status" value="1"/>
</dbReference>
<dbReference type="PIRSF" id="PIRSF019663">
    <property type="entry name" value="Legumain"/>
    <property type="match status" value="1"/>
</dbReference>
<dbReference type="PRINTS" id="PR00776">
    <property type="entry name" value="HEMOGLOBNASE"/>
</dbReference>
<name>LGMN_PONAB</name>